<accession>A3Q9A7</accession>
<evidence type="ECO:0000255" key="1">
    <source>
        <dbReference type="HAMAP-Rule" id="MF_00059"/>
    </source>
</evidence>
<dbReference type="EC" id="2.7.7.6" evidence="1"/>
<dbReference type="EMBL" id="CP000606">
    <property type="protein sequence ID" value="ABO22055.1"/>
    <property type="molecule type" value="Genomic_DNA"/>
</dbReference>
<dbReference type="RefSeq" id="WP_011863990.1">
    <property type="nucleotide sequence ID" value="NC_009092.1"/>
</dbReference>
<dbReference type="SMR" id="A3Q9A7"/>
<dbReference type="STRING" id="323850.Shew_0183"/>
<dbReference type="KEGG" id="slo:Shew_0183"/>
<dbReference type="eggNOG" id="COG0202">
    <property type="taxonomic scope" value="Bacteria"/>
</dbReference>
<dbReference type="HOGENOM" id="CLU_053084_0_0_6"/>
<dbReference type="OrthoDB" id="9805706at2"/>
<dbReference type="Proteomes" id="UP000001558">
    <property type="component" value="Chromosome"/>
</dbReference>
<dbReference type="GO" id="GO:0005737">
    <property type="term" value="C:cytoplasm"/>
    <property type="evidence" value="ECO:0007669"/>
    <property type="project" value="UniProtKB-ARBA"/>
</dbReference>
<dbReference type="GO" id="GO:0000428">
    <property type="term" value="C:DNA-directed RNA polymerase complex"/>
    <property type="evidence" value="ECO:0007669"/>
    <property type="project" value="UniProtKB-KW"/>
</dbReference>
<dbReference type="GO" id="GO:0003677">
    <property type="term" value="F:DNA binding"/>
    <property type="evidence" value="ECO:0007669"/>
    <property type="project" value="UniProtKB-UniRule"/>
</dbReference>
<dbReference type="GO" id="GO:0003899">
    <property type="term" value="F:DNA-directed RNA polymerase activity"/>
    <property type="evidence" value="ECO:0007669"/>
    <property type="project" value="UniProtKB-UniRule"/>
</dbReference>
<dbReference type="GO" id="GO:0046983">
    <property type="term" value="F:protein dimerization activity"/>
    <property type="evidence" value="ECO:0007669"/>
    <property type="project" value="InterPro"/>
</dbReference>
<dbReference type="GO" id="GO:0006351">
    <property type="term" value="P:DNA-templated transcription"/>
    <property type="evidence" value="ECO:0007669"/>
    <property type="project" value="UniProtKB-UniRule"/>
</dbReference>
<dbReference type="CDD" id="cd06928">
    <property type="entry name" value="RNAP_alpha_NTD"/>
    <property type="match status" value="1"/>
</dbReference>
<dbReference type="FunFam" id="1.10.150.20:FF:000001">
    <property type="entry name" value="DNA-directed RNA polymerase subunit alpha"/>
    <property type="match status" value="1"/>
</dbReference>
<dbReference type="FunFam" id="2.170.120.12:FF:000001">
    <property type="entry name" value="DNA-directed RNA polymerase subunit alpha"/>
    <property type="match status" value="1"/>
</dbReference>
<dbReference type="Gene3D" id="1.10.150.20">
    <property type="entry name" value="5' to 3' exonuclease, C-terminal subdomain"/>
    <property type="match status" value="1"/>
</dbReference>
<dbReference type="Gene3D" id="2.170.120.12">
    <property type="entry name" value="DNA-directed RNA polymerase, insert domain"/>
    <property type="match status" value="1"/>
</dbReference>
<dbReference type="Gene3D" id="3.30.1360.10">
    <property type="entry name" value="RNA polymerase, RBP11-like subunit"/>
    <property type="match status" value="1"/>
</dbReference>
<dbReference type="HAMAP" id="MF_00059">
    <property type="entry name" value="RNApol_bact_RpoA"/>
    <property type="match status" value="1"/>
</dbReference>
<dbReference type="InterPro" id="IPR011262">
    <property type="entry name" value="DNA-dir_RNA_pol_insert"/>
</dbReference>
<dbReference type="InterPro" id="IPR011263">
    <property type="entry name" value="DNA-dir_RNA_pol_RpoA/D/Rpb3"/>
</dbReference>
<dbReference type="InterPro" id="IPR011773">
    <property type="entry name" value="DNA-dir_RpoA"/>
</dbReference>
<dbReference type="InterPro" id="IPR036603">
    <property type="entry name" value="RBP11-like"/>
</dbReference>
<dbReference type="InterPro" id="IPR011260">
    <property type="entry name" value="RNAP_asu_C"/>
</dbReference>
<dbReference type="InterPro" id="IPR036643">
    <property type="entry name" value="RNApol_insert_sf"/>
</dbReference>
<dbReference type="NCBIfam" id="NF003513">
    <property type="entry name" value="PRK05182.1-2"/>
    <property type="match status" value="1"/>
</dbReference>
<dbReference type="NCBIfam" id="NF003519">
    <property type="entry name" value="PRK05182.2-5"/>
    <property type="match status" value="1"/>
</dbReference>
<dbReference type="NCBIfam" id="TIGR02027">
    <property type="entry name" value="rpoA"/>
    <property type="match status" value="1"/>
</dbReference>
<dbReference type="Pfam" id="PF01000">
    <property type="entry name" value="RNA_pol_A_bac"/>
    <property type="match status" value="1"/>
</dbReference>
<dbReference type="Pfam" id="PF03118">
    <property type="entry name" value="RNA_pol_A_CTD"/>
    <property type="match status" value="1"/>
</dbReference>
<dbReference type="Pfam" id="PF01193">
    <property type="entry name" value="RNA_pol_L"/>
    <property type="match status" value="1"/>
</dbReference>
<dbReference type="SMART" id="SM00662">
    <property type="entry name" value="RPOLD"/>
    <property type="match status" value="1"/>
</dbReference>
<dbReference type="SUPFAM" id="SSF47789">
    <property type="entry name" value="C-terminal domain of RNA polymerase alpha subunit"/>
    <property type="match status" value="1"/>
</dbReference>
<dbReference type="SUPFAM" id="SSF56553">
    <property type="entry name" value="Insert subdomain of RNA polymerase alpha subunit"/>
    <property type="match status" value="1"/>
</dbReference>
<dbReference type="SUPFAM" id="SSF55257">
    <property type="entry name" value="RBP11-like subunits of RNA polymerase"/>
    <property type="match status" value="1"/>
</dbReference>
<name>RPOA_SHELP</name>
<sequence length="329" mass="36201">MQGSVTEFLKPRLVDIEQVNPTRAKVTLEPLERGFGHTLGNALRRILLSSMPGCAVTEVEIDGVLHEYSSKEGVQEDILEILLNLKGLAVVIEGKDEAMLTLSKSGAGPVTAADITHDGDVTIMNPDHVICHLTGNNDISMRIRVERGRGYVPASARAQTEDDDRPIGRLLVDSSFSPVARIAYNVEAARVEQRTDLDKLVIDMTTNGTIDPEEAIRRSATILAEQLDAFVELRDVTEPEQKEEKPEFDPILLRPVDDLELTVRSANCLKAEAIHYIGDLVQRTEVELLKTPNLGKKSLTEIKDVLASRGLSLGMRLENWPPASLADDL</sequence>
<organism>
    <name type="scientific">Shewanella loihica (strain ATCC BAA-1088 / PV-4)</name>
    <dbReference type="NCBI Taxonomy" id="323850"/>
    <lineage>
        <taxon>Bacteria</taxon>
        <taxon>Pseudomonadati</taxon>
        <taxon>Pseudomonadota</taxon>
        <taxon>Gammaproteobacteria</taxon>
        <taxon>Alteromonadales</taxon>
        <taxon>Shewanellaceae</taxon>
        <taxon>Shewanella</taxon>
    </lineage>
</organism>
<comment type="function">
    <text evidence="1">DNA-dependent RNA polymerase catalyzes the transcription of DNA into RNA using the four ribonucleoside triphosphates as substrates.</text>
</comment>
<comment type="catalytic activity">
    <reaction evidence="1">
        <text>RNA(n) + a ribonucleoside 5'-triphosphate = RNA(n+1) + diphosphate</text>
        <dbReference type="Rhea" id="RHEA:21248"/>
        <dbReference type="Rhea" id="RHEA-COMP:14527"/>
        <dbReference type="Rhea" id="RHEA-COMP:17342"/>
        <dbReference type="ChEBI" id="CHEBI:33019"/>
        <dbReference type="ChEBI" id="CHEBI:61557"/>
        <dbReference type="ChEBI" id="CHEBI:140395"/>
        <dbReference type="EC" id="2.7.7.6"/>
    </reaction>
</comment>
<comment type="subunit">
    <text evidence="1">Homodimer. The RNAP catalytic core consists of 2 alpha, 1 beta, 1 beta' and 1 omega subunit. When a sigma factor is associated with the core the holoenzyme is formed, which can initiate transcription.</text>
</comment>
<comment type="domain">
    <text evidence="1">The N-terminal domain is essential for RNAP assembly and basal transcription, whereas the C-terminal domain is involved in interaction with transcriptional regulators and with upstream promoter elements.</text>
</comment>
<comment type="similarity">
    <text evidence="1">Belongs to the RNA polymerase alpha chain family.</text>
</comment>
<protein>
    <recommendedName>
        <fullName evidence="1">DNA-directed RNA polymerase subunit alpha</fullName>
        <shortName evidence="1">RNAP subunit alpha</shortName>
        <ecNumber evidence="1">2.7.7.6</ecNumber>
    </recommendedName>
    <alternativeName>
        <fullName evidence="1">RNA polymerase subunit alpha</fullName>
    </alternativeName>
    <alternativeName>
        <fullName evidence="1">Transcriptase subunit alpha</fullName>
    </alternativeName>
</protein>
<keyword id="KW-0240">DNA-directed RNA polymerase</keyword>
<keyword id="KW-0548">Nucleotidyltransferase</keyword>
<keyword id="KW-1185">Reference proteome</keyword>
<keyword id="KW-0804">Transcription</keyword>
<keyword id="KW-0808">Transferase</keyword>
<proteinExistence type="inferred from homology"/>
<gene>
    <name evidence="1" type="primary">rpoA</name>
    <name type="ordered locus">Shew_0183</name>
</gene>
<feature type="chain" id="PRO_0000296866" description="DNA-directed RNA polymerase subunit alpha">
    <location>
        <begin position="1"/>
        <end position="329"/>
    </location>
</feature>
<feature type="region of interest" description="Alpha N-terminal domain (alpha-NTD)" evidence="1">
    <location>
        <begin position="1"/>
        <end position="234"/>
    </location>
</feature>
<feature type="region of interest" description="Alpha C-terminal domain (alpha-CTD)" evidence="1">
    <location>
        <begin position="248"/>
        <end position="329"/>
    </location>
</feature>
<reference key="1">
    <citation type="submission" date="2007-03" db="EMBL/GenBank/DDBJ databases">
        <title>Complete sequence of Shewanella loihica PV-4.</title>
        <authorList>
            <consortium name="US DOE Joint Genome Institute"/>
            <person name="Copeland A."/>
            <person name="Lucas S."/>
            <person name="Lapidus A."/>
            <person name="Barry K."/>
            <person name="Detter J.C."/>
            <person name="Glavina del Rio T."/>
            <person name="Hammon N."/>
            <person name="Israni S."/>
            <person name="Dalin E."/>
            <person name="Tice H."/>
            <person name="Pitluck S."/>
            <person name="Chain P."/>
            <person name="Malfatti S."/>
            <person name="Shin M."/>
            <person name="Vergez L."/>
            <person name="Schmutz J."/>
            <person name="Larimer F."/>
            <person name="Land M."/>
            <person name="Hauser L."/>
            <person name="Kyrpides N."/>
            <person name="Mikhailova N."/>
            <person name="Romine M.F."/>
            <person name="Serres G."/>
            <person name="Fredrickson J."/>
            <person name="Tiedje J."/>
            <person name="Richardson P."/>
        </authorList>
    </citation>
    <scope>NUCLEOTIDE SEQUENCE [LARGE SCALE GENOMIC DNA]</scope>
    <source>
        <strain>ATCC BAA-1088 / PV-4</strain>
    </source>
</reference>